<proteinExistence type="evidence at protein level"/>
<name>CP125_MYCTU</name>
<organism>
    <name type="scientific">Mycobacterium tuberculosis (strain ATCC 25618 / H37Rv)</name>
    <dbReference type="NCBI Taxonomy" id="83332"/>
    <lineage>
        <taxon>Bacteria</taxon>
        <taxon>Bacillati</taxon>
        <taxon>Actinomycetota</taxon>
        <taxon>Actinomycetes</taxon>
        <taxon>Mycobacteriales</taxon>
        <taxon>Mycobacteriaceae</taxon>
        <taxon>Mycobacterium</taxon>
        <taxon>Mycobacterium tuberculosis complex</taxon>
    </lineage>
</organism>
<gene>
    <name evidence="5" type="primary">cyp125</name>
    <name evidence="6" type="synonym">cyp125A1</name>
    <name type="ordered locus">Rv3545c</name>
    <name type="ORF">MTCY03C7.11</name>
</gene>
<dbReference type="EC" id="1.14.15.29" evidence="3 4 8"/>
<dbReference type="EMBL" id="AL123456">
    <property type="protein sequence ID" value="CCP46367.1"/>
    <property type="molecule type" value="Genomic_DNA"/>
</dbReference>
<dbReference type="PIR" id="B70677">
    <property type="entry name" value="B70677"/>
</dbReference>
<dbReference type="RefSeq" id="NP_218062.1">
    <property type="nucleotide sequence ID" value="NC_000962.3"/>
</dbReference>
<dbReference type="RefSeq" id="WP_003419304.1">
    <property type="nucleotide sequence ID" value="NC_000962.3"/>
</dbReference>
<dbReference type="PDB" id="2X5L">
    <property type="method" value="X-ray"/>
    <property type="resolution" value="1.48 A"/>
    <property type="chains" value="A=18-433"/>
</dbReference>
<dbReference type="PDB" id="2X5W">
    <property type="method" value="X-ray"/>
    <property type="resolution" value="1.58 A"/>
    <property type="chains" value="A=1-433"/>
</dbReference>
<dbReference type="PDB" id="2XC3">
    <property type="method" value="X-ray"/>
    <property type="resolution" value="1.50 A"/>
    <property type="chains" value="A=18-433"/>
</dbReference>
<dbReference type="PDB" id="2XN8">
    <property type="method" value="X-ray"/>
    <property type="resolution" value="1.64 A"/>
    <property type="chains" value="A=18-433"/>
</dbReference>
<dbReference type="PDB" id="3IVY">
    <property type="method" value="X-ray"/>
    <property type="resolution" value="1.35 A"/>
    <property type="chains" value="A=1-433"/>
</dbReference>
<dbReference type="PDB" id="3IW0">
    <property type="method" value="X-ray"/>
    <property type="resolution" value="1.70 A"/>
    <property type="chains" value="A=1-433"/>
</dbReference>
<dbReference type="PDB" id="3IW1">
    <property type="method" value="X-ray"/>
    <property type="resolution" value="2.00 A"/>
    <property type="chains" value="A=1-433"/>
</dbReference>
<dbReference type="PDB" id="3IW2">
    <property type="method" value="X-ray"/>
    <property type="resolution" value="2.19 A"/>
    <property type="chains" value="A=1-433"/>
</dbReference>
<dbReference type="PDB" id="7QKE">
    <property type="method" value="X-ray"/>
    <property type="resolution" value="2.30 A"/>
    <property type="chains" value="A=18-433"/>
</dbReference>
<dbReference type="PDB" id="7QNN">
    <property type="method" value="X-ray"/>
    <property type="resolution" value="2.47 A"/>
    <property type="chains" value="A=18-433"/>
</dbReference>
<dbReference type="PDB" id="7QWN">
    <property type="method" value="X-ray"/>
    <property type="resolution" value="1.93 A"/>
    <property type="chains" value="A/B/C=18-432"/>
</dbReference>
<dbReference type="PDB" id="7R1I">
    <property type="method" value="X-ray"/>
    <property type="resolution" value="2.24 A"/>
    <property type="chains" value="A/B/C=18-433"/>
</dbReference>
<dbReference type="PDB" id="7R3U">
    <property type="method" value="X-ray"/>
    <property type="resolution" value="1.86 A"/>
    <property type="chains" value="A/B/C=18-433"/>
</dbReference>
<dbReference type="PDB" id="7YXF">
    <property type="method" value="X-ray"/>
    <property type="resolution" value="1.85 A"/>
    <property type="chains" value="A/B/C=18-433"/>
</dbReference>
<dbReference type="PDB" id="7ZGL">
    <property type="method" value="X-ray"/>
    <property type="resolution" value="2.50 A"/>
    <property type="chains" value="A/B/C=18-433"/>
</dbReference>
<dbReference type="PDB" id="7ZIC">
    <property type="method" value="X-ray"/>
    <property type="resolution" value="1.90 A"/>
    <property type="chains" value="A/B/C=18-433"/>
</dbReference>
<dbReference type="PDB" id="7ZLT">
    <property type="method" value="X-ray"/>
    <property type="resolution" value="1.90 A"/>
    <property type="chains" value="A/B/C=18-433"/>
</dbReference>
<dbReference type="PDB" id="7ZLZ">
    <property type="method" value="X-ray"/>
    <property type="resolution" value="1.89 A"/>
    <property type="chains" value="A/B/C=18-433"/>
</dbReference>
<dbReference type="PDB" id="7ZQR">
    <property type="method" value="X-ray"/>
    <property type="resolution" value="1.79 A"/>
    <property type="chains" value="A/B/C=18-433"/>
</dbReference>
<dbReference type="PDB" id="7ZSU">
    <property type="method" value="X-ray"/>
    <property type="resolution" value="2.20 A"/>
    <property type="chains" value="A/B/C=18-433"/>
</dbReference>
<dbReference type="PDB" id="7ZT0">
    <property type="method" value="X-ray"/>
    <property type="resolution" value="1.99 A"/>
    <property type="chains" value="A/B=18-433"/>
</dbReference>
<dbReference type="PDB" id="7ZXD">
    <property type="method" value="X-ray"/>
    <property type="resolution" value="2.09 A"/>
    <property type="chains" value="A/B/C=18-433"/>
</dbReference>
<dbReference type="PDB" id="8S4M">
    <property type="method" value="X-ray"/>
    <property type="resolution" value="2.10 A"/>
    <property type="chains" value="A/B/C=18-433"/>
</dbReference>
<dbReference type="PDBsum" id="2X5L"/>
<dbReference type="PDBsum" id="2X5W"/>
<dbReference type="PDBsum" id="2XC3"/>
<dbReference type="PDBsum" id="2XN8"/>
<dbReference type="PDBsum" id="3IVY"/>
<dbReference type="PDBsum" id="3IW0"/>
<dbReference type="PDBsum" id="3IW1"/>
<dbReference type="PDBsum" id="3IW2"/>
<dbReference type="PDBsum" id="7QKE"/>
<dbReference type="PDBsum" id="7QNN"/>
<dbReference type="PDBsum" id="7QWN"/>
<dbReference type="PDBsum" id="7R1I"/>
<dbReference type="PDBsum" id="7R3U"/>
<dbReference type="PDBsum" id="7YXF"/>
<dbReference type="PDBsum" id="7ZGL"/>
<dbReference type="PDBsum" id="7ZIC"/>
<dbReference type="PDBsum" id="7ZLT"/>
<dbReference type="PDBsum" id="7ZLZ"/>
<dbReference type="PDBsum" id="7ZQR"/>
<dbReference type="PDBsum" id="7ZSU"/>
<dbReference type="PDBsum" id="7ZT0"/>
<dbReference type="PDBsum" id="7ZXD"/>
<dbReference type="PDBsum" id="8S4M"/>
<dbReference type="SMR" id="P9WPP1"/>
<dbReference type="FunCoup" id="P9WPP1">
    <property type="interactions" value="23"/>
</dbReference>
<dbReference type="STRING" id="83332.Rv3545c"/>
<dbReference type="ChEMBL" id="CHEMBL5629"/>
<dbReference type="SwissLipids" id="SLP:000000994"/>
<dbReference type="PaxDb" id="83332-Rv3545c"/>
<dbReference type="DNASU" id="887782"/>
<dbReference type="GeneID" id="887782"/>
<dbReference type="KEGG" id="mtu:Rv3545c"/>
<dbReference type="KEGG" id="mtv:RVBD_3545c"/>
<dbReference type="PATRIC" id="fig|83332.111.peg.3950"/>
<dbReference type="TubercuList" id="Rv3545c"/>
<dbReference type="eggNOG" id="COG2124">
    <property type="taxonomic scope" value="Bacteria"/>
</dbReference>
<dbReference type="InParanoid" id="P9WPP1"/>
<dbReference type="OrthoDB" id="5241086at2"/>
<dbReference type="PhylomeDB" id="P9WPP1"/>
<dbReference type="BioCyc" id="MetaCyc:G185E-7822-MONOMER"/>
<dbReference type="BRENDA" id="1.14.15.29">
    <property type="organism ID" value="3445"/>
</dbReference>
<dbReference type="UniPathway" id="UPA01058"/>
<dbReference type="EvolutionaryTrace" id="P9WPP1"/>
<dbReference type="PRO" id="PR:P9WPP1"/>
<dbReference type="Proteomes" id="UP000001584">
    <property type="component" value="Chromosome"/>
</dbReference>
<dbReference type="GO" id="GO:0036199">
    <property type="term" value="F:cholest-4-en-3-one 26-monooxygenase activity"/>
    <property type="evidence" value="ECO:0000314"/>
    <property type="project" value="MTBBASE"/>
</dbReference>
<dbReference type="GO" id="GO:0020037">
    <property type="term" value="F:heme binding"/>
    <property type="evidence" value="ECO:0000314"/>
    <property type="project" value="MTBBASE"/>
</dbReference>
<dbReference type="GO" id="GO:0005506">
    <property type="term" value="F:iron ion binding"/>
    <property type="evidence" value="ECO:0007669"/>
    <property type="project" value="InterPro"/>
</dbReference>
<dbReference type="GO" id="GO:0008395">
    <property type="term" value="F:steroid hydroxylase activity"/>
    <property type="evidence" value="ECO:0000314"/>
    <property type="project" value="MTBBASE"/>
</dbReference>
<dbReference type="GO" id="GO:0051701">
    <property type="term" value="P:biological process involved in interaction with host"/>
    <property type="evidence" value="ECO:0000315"/>
    <property type="project" value="MTBBASE"/>
</dbReference>
<dbReference type="GO" id="GO:0006707">
    <property type="term" value="P:cholesterol catabolic process"/>
    <property type="evidence" value="ECO:0000314"/>
    <property type="project" value="MTBBASE"/>
</dbReference>
<dbReference type="CDD" id="cd11033">
    <property type="entry name" value="CYP142-like"/>
    <property type="match status" value="1"/>
</dbReference>
<dbReference type="FunFam" id="1.10.630.10:FF:000103">
    <property type="entry name" value="Steroid C26-monooxygenase"/>
    <property type="match status" value="1"/>
</dbReference>
<dbReference type="Gene3D" id="1.10.630.10">
    <property type="entry name" value="Cytochrome P450"/>
    <property type="match status" value="1"/>
</dbReference>
<dbReference type="InterPro" id="IPR001128">
    <property type="entry name" value="Cyt_P450"/>
</dbReference>
<dbReference type="InterPro" id="IPR002397">
    <property type="entry name" value="Cyt_P450_B"/>
</dbReference>
<dbReference type="InterPro" id="IPR036396">
    <property type="entry name" value="Cyt_P450_sf"/>
</dbReference>
<dbReference type="PANTHER" id="PTHR46696:SF4">
    <property type="entry name" value="BIOTIN BIOSYNTHESIS CYTOCHROME P450"/>
    <property type="match status" value="1"/>
</dbReference>
<dbReference type="PANTHER" id="PTHR46696">
    <property type="entry name" value="P450, PUTATIVE (EUROFUNG)-RELATED"/>
    <property type="match status" value="1"/>
</dbReference>
<dbReference type="Pfam" id="PF00067">
    <property type="entry name" value="p450"/>
    <property type="match status" value="1"/>
</dbReference>
<dbReference type="PRINTS" id="PR00359">
    <property type="entry name" value="BP450"/>
</dbReference>
<dbReference type="SUPFAM" id="SSF48264">
    <property type="entry name" value="Cytochrome P450"/>
    <property type="match status" value="1"/>
</dbReference>
<comment type="function">
    <text evidence="1 3 4">Involved in the utilization of cholesterol as the sole carbon and energy source by degrading the side chain during infection (PubMed:20545858, PubMed:20843794). Primarily catalyzes the sequential oxidation of the terminal methyl of cholest-4-en-3-one into (25S)-26-hydroxycholest-4-en-3-one (alcohol), (25S)-26-oxocholest-4-en-3-one (aldehyde), to finally yield the carboxylic acid (25S)-3-oxocholest-4-en-26-oate (PubMed:19846551, PubMed:20545858, PubMed:20843794). Also able to sequentially oxidize cholesterol itself, not only cholest-4-en-3-one (PubMed:19846551, PubMed:20545858, PubMed:20843794).</text>
</comment>
<comment type="catalytic activity">
    <reaction evidence="3 4 8">
        <text>cholest-4-en-3-one + 6 reduced [2Fe-2S]-[ferredoxin] + 3 O2 + 5 H(+) = (25S)-3-oxocholest-4-en-26-oate + 6 oxidized [2Fe-2S]-[ferredoxin] + 4 H2O</text>
        <dbReference type="Rhea" id="RHEA:51564"/>
        <dbReference type="Rhea" id="RHEA-COMP:10000"/>
        <dbReference type="Rhea" id="RHEA-COMP:10001"/>
        <dbReference type="ChEBI" id="CHEBI:15377"/>
        <dbReference type="ChEBI" id="CHEBI:15378"/>
        <dbReference type="ChEBI" id="CHEBI:15379"/>
        <dbReference type="ChEBI" id="CHEBI:16175"/>
        <dbReference type="ChEBI" id="CHEBI:33737"/>
        <dbReference type="ChEBI" id="CHEBI:33738"/>
        <dbReference type="ChEBI" id="CHEBI:71541"/>
        <dbReference type="EC" id="1.14.15.29"/>
    </reaction>
</comment>
<comment type="catalytic activity">
    <reaction evidence="4">
        <text>(25R)-3-oxocholest-4-en-26-ol + 2 reduced [2Fe-2S]-[ferredoxin] + O2 + 2 H(+) = (25R)-3-oxocholest-4-en-26-al + 2 oxidized [2Fe-2S]-[ferredoxin] + 2 H2O</text>
        <dbReference type="Rhea" id="RHEA:43916"/>
        <dbReference type="Rhea" id="RHEA-COMP:10000"/>
        <dbReference type="Rhea" id="RHEA-COMP:10001"/>
        <dbReference type="ChEBI" id="CHEBI:15377"/>
        <dbReference type="ChEBI" id="CHEBI:15378"/>
        <dbReference type="ChEBI" id="CHEBI:15379"/>
        <dbReference type="ChEBI" id="CHEBI:33737"/>
        <dbReference type="ChEBI" id="CHEBI:33738"/>
        <dbReference type="ChEBI" id="CHEBI:83861"/>
        <dbReference type="ChEBI" id="CHEBI:83862"/>
    </reaction>
    <physiologicalReaction direction="left-to-right" evidence="4">
        <dbReference type="Rhea" id="RHEA:43917"/>
    </physiologicalReaction>
</comment>
<comment type="catalytic activity">
    <reaction evidence="4">
        <text>(25R)-3-oxocholest-4-en-26-al + 2 reduced [2Fe-2S]-[ferredoxin] + O2 + H(+) = (25R)-3-oxocholest-4-en-26-oate + 2 oxidized [2Fe-2S]-[ferredoxin] + H2O</text>
        <dbReference type="Rhea" id="RHEA:43920"/>
        <dbReference type="Rhea" id="RHEA-COMP:10000"/>
        <dbReference type="Rhea" id="RHEA-COMP:10001"/>
        <dbReference type="ChEBI" id="CHEBI:15377"/>
        <dbReference type="ChEBI" id="CHEBI:15378"/>
        <dbReference type="ChEBI" id="CHEBI:15379"/>
        <dbReference type="ChEBI" id="CHEBI:33737"/>
        <dbReference type="ChEBI" id="CHEBI:33738"/>
        <dbReference type="ChEBI" id="CHEBI:71570"/>
        <dbReference type="ChEBI" id="CHEBI:83862"/>
    </reaction>
    <physiologicalReaction direction="left-to-right" evidence="4">
        <dbReference type="Rhea" id="RHEA:43921"/>
    </physiologicalReaction>
</comment>
<comment type="catalytic activity">
    <reaction evidence="4">
        <text>cholest-4-en-3-one + 2 reduced [2Fe-2S]-[ferredoxin] + O2 + 2 H(+) = (25S)-3-oxocholest-4-en-26-ol + 2 oxidized [2Fe-2S]-[ferredoxin] + H2O</text>
        <dbReference type="Rhea" id="RHEA:31943"/>
        <dbReference type="Rhea" id="RHEA-COMP:10000"/>
        <dbReference type="Rhea" id="RHEA-COMP:10001"/>
        <dbReference type="ChEBI" id="CHEBI:15377"/>
        <dbReference type="ChEBI" id="CHEBI:15378"/>
        <dbReference type="ChEBI" id="CHEBI:15379"/>
        <dbReference type="ChEBI" id="CHEBI:16175"/>
        <dbReference type="ChEBI" id="CHEBI:33737"/>
        <dbReference type="ChEBI" id="CHEBI:33738"/>
        <dbReference type="ChEBI" id="CHEBI:83860"/>
    </reaction>
    <physiologicalReaction direction="left-to-right" evidence="4">
        <dbReference type="Rhea" id="RHEA:31944"/>
    </physiologicalReaction>
</comment>
<comment type="catalytic activity">
    <reaction evidence="4">
        <text>(25S)-3-oxocholest-4-en-26-ol + 2 reduced [2Fe-2S]-[ferredoxin] + O2 + 2 H(+) = (25S)-3-oxocholest-4-en-26-al + 2 oxidized [2Fe-2S]-[ferredoxin] + 2 H2O</text>
        <dbReference type="Rhea" id="RHEA:51568"/>
        <dbReference type="Rhea" id="RHEA-COMP:10000"/>
        <dbReference type="Rhea" id="RHEA-COMP:10001"/>
        <dbReference type="ChEBI" id="CHEBI:15377"/>
        <dbReference type="ChEBI" id="CHEBI:15378"/>
        <dbReference type="ChEBI" id="CHEBI:15379"/>
        <dbReference type="ChEBI" id="CHEBI:33737"/>
        <dbReference type="ChEBI" id="CHEBI:33738"/>
        <dbReference type="ChEBI" id="CHEBI:83860"/>
        <dbReference type="ChEBI" id="CHEBI:83863"/>
    </reaction>
    <physiologicalReaction direction="left-to-right" evidence="4">
        <dbReference type="Rhea" id="RHEA:51569"/>
    </physiologicalReaction>
</comment>
<comment type="catalytic activity">
    <reaction evidence="4">
        <text>(25S)-3-oxocholest-4-en-26-al + 2 reduced [2Fe-2S]-[ferredoxin] + O2 + H(+) = (25S)-3-oxocholest-4-en-26-oate + 2 oxidized [2Fe-2S]-[ferredoxin] + H2O</text>
        <dbReference type="Rhea" id="RHEA:51572"/>
        <dbReference type="Rhea" id="RHEA-COMP:10000"/>
        <dbReference type="Rhea" id="RHEA-COMP:10001"/>
        <dbReference type="ChEBI" id="CHEBI:15377"/>
        <dbReference type="ChEBI" id="CHEBI:15378"/>
        <dbReference type="ChEBI" id="CHEBI:15379"/>
        <dbReference type="ChEBI" id="CHEBI:33737"/>
        <dbReference type="ChEBI" id="CHEBI:33738"/>
        <dbReference type="ChEBI" id="CHEBI:71541"/>
        <dbReference type="ChEBI" id="CHEBI:83863"/>
    </reaction>
    <physiologicalReaction direction="left-to-right" evidence="4">
        <dbReference type="Rhea" id="RHEA:51573"/>
    </physiologicalReaction>
</comment>
<comment type="cofactor">
    <cofactor evidence="2 3">
        <name>heme</name>
        <dbReference type="ChEBI" id="CHEBI:30413"/>
    </cofactor>
</comment>
<comment type="pathway">
    <text evidence="8 9">Steroid metabolism; cholesterol degradation.</text>
</comment>
<comment type="induction">
    <text evidence="4">By cholesterol.</text>
</comment>
<comment type="disruption phenotype">
    <text evidence="1 3">Cells lacking this gene appear to metabolize cholesterol normally, probably due to the ability of Cyp142 to compensate for loss of Cyp125.</text>
</comment>
<comment type="similarity">
    <text evidence="7">Belongs to the cytochrome P450 family.</text>
</comment>
<evidence type="ECO:0000269" key="1">
    <source>
    </source>
</evidence>
<evidence type="ECO:0000269" key="2">
    <source>
    </source>
</evidence>
<evidence type="ECO:0000269" key="3">
    <source>
    </source>
</evidence>
<evidence type="ECO:0000269" key="4">
    <source>
    </source>
</evidence>
<evidence type="ECO:0000303" key="5">
    <source>
    </source>
</evidence>
<evidence type="ECO:0000303" key="6">
    <source>
    </source>
</evidence>
<evidence type="ECO:0000305" key="7"/>
<evidence type="ECO:0000305" key="8">
    <source>
    </source>
</evidence>
<evidence type="ECO:0000305" key="9">
    <source>
    </source>
</evidence>
<evidence type="ECO:0007744" key="10">
    <source>
        <dbReference type="PDB" id="2X5L"/>
    </source>
</evidence>
<evidence type="ECO:0007744" key="11">
    <source>
        <dbReference type="PDB" id="2X5W"/>
    </source>
</evidence>
<evidence type="ECO:0007744" key="12">
    <source>
        <dbReference type="PDB" id="2XC3"/>
    </source>
</evidence>
<evidence type="ECO:0007744" key="13">
    <source>
        <dbReference type="PDB" id="2XN8"/>
    </source>
</evidence>
<evidence type="ECO:0007744" key="14">
    <source>
        <dbReference type="PDB" id="3IVY"/>
    </source>
</evidence>
<evidence type="ECO:0007744" key="15">
    <source>
        <dbReference type="PDB" id="3IW0"/>
    </source>
</evidence>
<evidence type="ECO:0007744" key="16">
    <source>
        <dbReference type="PDB" id="3IW1"/>
    </source>
</evidence>
<evidence type="ECO:0007744" key="17">
    <source>
        <dbReference type="PDB" id="3IW2"/>
    </source>
</evidence>
<evidence type="ECO:0007829" key="18">
    <source>
        <dbReference type="PDB" id="2X5W"/>
    </source>
</evidence>
<evidence type="ECO:0007829" key="19">
    <source>
        <dbReference type="PDB" id="3IVY"/>
    </source>
</evidence>
<evidence type="ECO:0007829" key="20">
    <source>
        <dbReference type="PDB" id="7R3U"/>
    </source>
</evidence>
<accession>P9WPP1</accession>
<accession>L0TEH2</accession>
<accession>P63709</accession>
<accession>P71856</accession>
<feature type="chain" id="PRO_0000052280" description="Steroid C26-monooxygenase">
    <location>
        <begin position="1"/>
        <end position="433"/>
    </location>
</feature>
<feature type="binding site" evidence="2 16">
    <location>
        <position position="202"/>
    </location>
    <ligand>
        <name>substrate</name>
    </ligand>
</feature>
<feature type="binding site" description="axial binding residue" evidence="3 10 11 12 13 14 15 16 17">
    <location>
        <position position="377"/>
    </location>
    <ligand>
        <name>heme</name>
        <dbReference type="ChEBI" id="CHEBI:30413"/>
    </ligand>
    <ligandPart>
        <name>Fe</name>
        <dbReference type="ChEBI" id="CHEBI:18248"/>
    </ligandPart>
</feature>
<feature type="helix" evidence="19">
    <location>
        <begin position="31"/>
        <end position="34"/>
    </location>
</feature>
<feature type="helix" evidence="19">
    <location>
        <begin position="40"/>
        <end position="49"/>
    </location>
</feature>
<feature type="strand" evidence="19">
    <location>
        <begin position="51"/>
        <end position="56"/>
    </location>
</feature>
<feature type="strand" evidence="19">
    <location>
        <begin position="67"/>
        <end position="73"/>
    </location>
</feature>
<feature type="helix" evidence="19">
    <location>
        <begin position="76"/>
        <end position="84"/>
    </location>
</feature>
<feature type="turn" evidence="19">
    <location>
        <begin position="86"/>
        <end position="88"/>
    </location>
</feature>
<feature type="strand" evidence="19">
    <location>
        <begin position="89"/>
        <end position="91"/>
    </location>
</feature>
<feature type="turn" evidence="19">
    <location>
        <begin position="92"/>
        <end position="94"/>
    </location>
</feature>
<feature type="helix" evidence="19">
    <location>
        <begin position="106"/>
        <end position="110"/>
    </location>
</feature>
<feature type="helix" evidence="19">
    <location>
        <begin position="111"/>
        <end position="114"/>
    </location>
</feature>
<feature type="helix" evidence="19">
    <location>
        <begin position="116"/>
        <end position="118"/>
    </location>
</feature>
<feature type="helix" evidence="19">
    <location>
        <begin position="123"/>
        <end position="131"/>
    </location>
</feature>
<feature type="helix" evidence="19">
    <location>
        <begin position="132"/>
        <end position="134"/>
    </location>
</feature>
<feature type="helix" evidence="19">
    <location>
        <begin position="137"/>
        <end position="141"/>
    </location>
</feature>
<feature type="helix" evidence="19">
    <location>
        <begin position="144"/>
        <end position="161"/>
    </location>
</feature>
<feature type="strand" evidence="19">
    <location>
        <begin position="163"/>
        <end position="165"/>
    </location>
</feature>
<feature type="helix" evidence="19">
    <location>
        <begin position="166"/>
        <end position="169"/>
    </location>
</feature>
<feature type="turn" evidence="18">
    <location>
        <begin position="170"/>
        <end position="172"/>
    </location>
</feature>
<feature type="helix" evidence="19">
    <location>
        <begin position="173"/>
        <end position="183"/>
    </location>
</feature>
<feature type="helix" evidence="19">
    <location>
        <begin position="187"/>
        <end position="189"/>
    </location>
</feature>
<feature type="helix" evidence="19">
    <location>
        <begin position="190"/>
        <end position="197"/>
    </location>
</feature>
<feature type="helix" evidence="19">
    <location>
        <begin position="206"/>
        <end position="208"/>
    </location>
</feature>
<feature type="helix" evidence="19">
    <location>
        <begin position="213"/>
        <end position="230"/>
    </location>
</feature>
<feature type="strand" evidence="20">
    <location>
        <begin position="237"/>
        <end position="239"/>
    </location>
</feature>
<feature type="helix" evidence="19">
    <location>
        <begin position="240"/>
        <end position="244"/>
    </location>
</feature>
<feature type="helix" evidence="19">
    <location>
        <begin position="255"/>
        <end position="268"/>
    </location>
</feature>
<feature type="helix" evidence="19">
    <location>
        <begin position="271"/>
        <end position="286"/>
    </location>
</feature>
<feature type="helix" evidence="19">
    <location>
        <begin position="288"/>
        <end position="297"/>
    </location>
</feature>
<feature type="helix" evidence="19">
    <location>
        <begin position="302"/>
        <end position="310"/>
    </location>
</feature>
<feature type="strand" evidence="19">
    <location>
        <begin position="315"/>
        <end position="322"/>
    </location>
</feature>
<feature type="strand" evidence="19">
    <location>
        <begin position="324"/>
        <end position="326"/>
    </location>
</feature>
<feature type="strand" evidence="19">
    <location>
        <begin position="329"/>
        <end position="331"/>
    </location>
</feature>
<feature type="strand" evidence="19">
    <location>
        <begin position="336"/>
        <end position="340"/>
    </location>
</feature>
<feature type="helix" evidence="19">
    <location>
        <begin position="341"/>
        <end position="344"/>
    </location>
</feature>
<feature type="turn" evidence="19">
    <location>
        <begin position="348"/>
        <end position="350"/>
    </location>
</feature>
<feature type="strand" evidence="19">
    <location>
        <begin position="351"/>
        <end position="353"/>
    </location>
</feature>
<feature type="strand" evidence="19">
    <location>
        <begin position="371"/>
        <end position="373"/>
    </location>
</feature>
<feature type="helix" evidence="19">
    <location>
        <begin position="380"/>
        <end position="397"/>
    </location>
</feature>
<feature type="strand" evidence="19">
    <location>
        <begin position="402"/>
        <end position="405"/>
    </location>
</feature>
<feature type="strand" evidence="19">
    <location>
        <begin position="413"/>
        <end position="415"/>
    </location>
</feature>
<feature type="strand" evidence="19">
    <location>
        <begin position="418"/>
        <end position="420"/>
    </location>
</feature>
<feature type="strand" evidence="19">
    <location>
        <begin position="422"/>
        <end position="425"/>
    </location>
</feature>
<reference key="1">
    <citation type="journal article" date="1998" name="Nature">
        <title>Deciphering the biology of Mycobacterium tuberculosis from the complete genome sequence.</title>
        <authorList>
            <person name="Cole S.T."/>
            <person name="Brosch R."/>
            <person name="Parkhill J."/>
            <person name="Garnier T."/>
            <person name="Churcher C.M."/>
            <person name="Harris D.E."/>
            <person name="Gordon S.V."/>
            <person name="Eiglmeier K."/>
            <person name="Gas S."/>
            <person name="Barry C.E. III"/>
            <person name="Tekaia F."/>
            <person name="Badcock K."/>
            <person name="Basham D."/>
            <person name="Brown D."/>
            <person name="Chillingworth T."/>
            <person name="Connor R."/>
            <person name="Davies R.M."/>
            <person name="Devlin K."/>
            <person name="Feltwell T."/>
            <person name="Gentles S."/>
            <person name="Hamlin N."/>
            <person name="Holroyd S."/>
            <person name="Hornsby T."/>
            <person name="Jagels K."/>
            <person name="Krogh A."/>
            <person name="McLean J."/>
            <person name="Moule S."/>
            <person name="Murphy L.D."/>
            <person name="Oliver S."/>
            <person name="Osborne J."/>
            <person name="Quail M.A."/>
            <person name="Rajandream M.A."/>
            <person name="Rogers J."/>
            <person name="Rutter S."/>
            <person name="Seeger K."/>
            <person name="Skelton S."/>
            <person name="Squares S."/>
            <person name="Squares R."/>
            <person name="Sulston J.E."/>
            <person name="Taylor K."/>
            <person name="Whitehead S."/>
            <person name="Barrell B.G."/>
        </authorList>
    </citation>
    <scope>NUCLEOTIDE SEQUENCE [LARGE SCALE GENOMIC DNA]</scope>
    <source>
        <strain>ATCC 25618 / H37Rv</strain>
    </source>
</reference>
<reference key="2">
    <citation type="journal article" date="2009" name="J. Biol. Chem.">
        <title>Mycobacterial cytochrome p450 125 (cyp125) catalyzes the terminal hydroxylation of c27 steroids.</title>
        <authorList>
            <person name="Capyk J.K."/>
            <person name="Kalscheuer R."/>
            <person name="Stewart G.R."/>
            <person name="Liu J."/>
            <person name="Kwon H."/>
            <person name="Zhao R."/>
            <person name="Okamoto S."/>
            <person name="Jacobs W.R. Jr."/>
            <person name="Eltis L.D."/>
            <person name="Mohn W.W."/>
        </authorList>
    </citation>
    <scope>FUNCTION IN CHOLESTEROL CATABOLISM</scope>
    <scope>CATALYTIC ACTIVITY</scope>
    <scope>SUBSTRATE SPECIFICITY</scope>
    <scope>DISRUPTION PHENOTYPE</scope>
    <scope>PATHWAY</scope>
    <source>
        <strain>ATCC 25618 / H37Rv</strain>
    </source>
</reference>
<reference key="3">
    <citation type="journal article" date="2010" name="J. Biol. Chem.">
        <title>Functional redundancy of steroid C26-monooxygenase activity in Mycobacterium tuberculosis revealed by biochemical and genetic analyses.</title>
        <authorList>
            <person name="Johnston J.B."/>
            <person name="Ouellet H."/>
            <person name="Ortiz de Montellano P.R."/>
        </authorList>
    </citation>
    <scope>FUNCTION</scope>
    <scope>CATALYTIC ACTIVITY</scope>
    <scope>INDUCTION</scope>
    <scope>PATHWAY</scope>
    <scope>SUBSTRATE SPECIFICITY</scope>
</reference>
<reference key="4">
    <citation type="journal article" date="2011" name="Mol. Cell. Proteomics">
        <title>Proteogenomic analysis of Mycobacterium tuberculosis by high resolution mass spectrometry.</title>
        <authorList>
            <person name="Kelkar D.S."/>
            <person name="Kumar D."/>
            <person name="Kumar P."/>
            <person name="Balakrishnan L."/>
            <person name="Muthusamy B."/>
            <person name="Yadav A.K."/>
            <person name="Shrivastava P."/>
            <person name="Marimuthu A."/>
            <person name="Anand S."/>
            <person name="Sundaram H."/>
            <person name="Kingsbury R."/>
            <person name="Harsha H.C."/>
            <person name="Nair B."/>
            <person name="Prasad T.S."/>
            <person name="Chauhan D.S."/>
            <person name="Katoch K."/>
            <person name="Katoch V.M."/>
            <person name="Kumar P."/>
            <person name="Chaerkady R."/>
            <person name="Ramachandran S."/>
            <person name="Dash D."/>
            <person name="Pandey A."/>
        </authorList>
    </citation>
    <scope>IDENTIFICATION BY MASS SPECTROMETRY [LARGE SCALE ANALYSIS]</scope>
    <source>
        <strain>ATCC 25618 / H37Rv</strain>
    </source>
</reference>
<reference key="5">
    <citation type="journal article" date="2009" name="J. Biol. Chem.">
        <title>The Structure of Mycobacterium tuberculosis CYP125: molecular basis for cholesterol binding in a P450 needed for host infection.</title>
        <authorList>
            <person name="McLean K.J."/>
            <person name="Lafite P."/>
            <person name="Levy C."/>
            <person name="Cheesman M.R."/>
            <person name="Mast N."/>
            <person name="Pikuleva I.A."/>
            <person name="Leys D."/>
            <person name="Munro A.W."/>
        </authorList>
    </citation>
    <scope>X-RAY CRYSTALLOGRAPHY (1.35 ANGSTROMS) IN COMPLEX WITH SUBSTRATE ANALOG</scope>
    <scope>COFACTOR</scope>
    <source>
        <strain>ATCC 25618 / H37Rv</strain>
    </source>
</reference>
<reference key="6">
    <citation type="journal article" date="2010" name="Mol. Microbiol.">
        <title>Mycobacterium tuberculosis CYP125A1, a steroid C27 monooxygenase that detoxifies intracellularly generated cholest-4-en-3-one.</title>
        <authorList>
            <person name="Ouellet H."/>
            <person name="Guan S."/>
            <person name="Johnston J.B."/>
            <person name="Chow E.D."/>
            <person name="Kells P.M."/>
            <person name="Burlingame A.L."/>
            <person name="Cox J.S."/>
            <person name="Podust L.M."/>
            <person name="de Montellano P.R."/>
        </authorList>
    </citation>
    <scope>X-RAY CRYSTALLOGRAPHY (1.58 ANGSTROMS) IN COMPLEX WITH HEME</scope>
    <scope>FUNCTION IN CHOLESTEROL CATABOLISM</scope>
    <scope>CATALYTIC ACTIVITY</scope>
    <scope>COFACTOR</scope>
    <scope>DISRUPTION PHENOTYPE</scope>
    <scope>SUBSTRATE SPECIFICITY</scope>
    <source>
        <strain>ATCC 25618 / H37Rv</strain>
    </source>
</reference>
<reference key="7">
    <citation type="journal article" date="2011" name="Bioorg. Med. Chem. Lett.">
        <title>Reverse type I inhibitor of Mycobacteriumtuberculosis CYP125A1.</title>
        <authorList>
            <person name="Ouellet H."/>
            <person name="Kells P.M."/>
            <person name="Ortiz de Montellano P.R."/>
            <person name="Podust L.M."/>
        </authorList>
    </citation>
    <scope>X-RAY CRYSTALLOGRAPHY (1.48 ANGSTROMS) OF 18-433</scope>
    <source>
        <strain>ATCC 25618 / H37Rv</strain>
    </source>
</reference>
<keyword id="KW-0002">3D-structure</keyword>
<keyword id="KW-0153">Cholesterol metabolism</keyword>
<keyword id="KW-0349">Heme</keyword>
<keyword id="KW-0408">Iron</keyword>
<keyword id="KW-0442">Lipid degradation</keyword>
<keyword id="KW-0443">Lipid metabolism</keyword>
<keyword id="KW-0479">Metal-binding</keyword>
<keyword id="KW-0503">Monooxygenase</keyword>
<keyword id="KW-0520">NAD</keyword>
<keyword id="KW-0560">Oxidoreductase</keyword>
<keyword id="KW-1185">Reference proteome</keyword>
<keyword id="KW-0753">Steroid metabolism</keyword>
<keyword id="KW-1207">Sterol metabolism</keyword>
<keyword id="KW-0843">Virulence</keyword>
<sequence length="433" mass="48433">MSWNHQSVEIAVRRTTVPSPNLPPGFDFTDPAIYAERLPVAEFAELRSAAPIWWNGQDPGKGGGFHDGGFWAITKLNDVKEISRHSDVFSSYENGVIPRFKNDIAREDIEVQRFVMLNMDAPHHTRLRKIISRGFTPRAVGRLHDELQERAQKIAAEAAAAGSGDFVEQVSCELPLQAIAGLLGVPQEDRGKLFHWSNEMTGNEDPEYAHIDPKASSAELIGYAMKMAEEKAKNPADDIVTQLIQADIDGEKLSDDEFGFFVVMLAVAGNETTRNSITQGMMAFAEHPDQWELYKKVRPETAADEIVRWATPVTAFQRTALRDYELSGVQIKKGQRVVMFYRSANFDEEVFQDPFTFNILRNPNPHVGFGGTGAHYCIGANLARMTINLIFNAVADHMPDLKPISAPERLRSGWLNGIKHWQVDYTGRCPVAH</sequence>
<protein>
    <recommendedName>
        <fullName evidence="5">Steroid C26-monooxygenase</fullName>
        <ecNumber evidence="3 4 8">1.14.15.29</ecNumber>
    </recommendedName>
    <alternativeName>
        <fullName evidence="5">Cholest-4-en-3-one 26-monooxygenase</fullName>
    </alternativeName>
    <alternativeName>
        <fullName evidence="9">Cholest-4-en-3-one C26-monooxygenase [(25S)-3-oxocholest-4-en-26-oate forming]</fullName>
    </alternativeName>
    <alternativeName>
        <fullName evidence="5">Cholesterol C26-monooxygenase</fullName>
    </alternativeName>
    <alternativeName>
        <fullName evidence="9">Cholesterol C26-monooxygenase [(25S)-3beta-hydroxycholest-5-en-26-oate forming]</fullName>
    </alternativeName>
    <alternativeName>
        <fullName evidence="5">Cytochrome P450 125</fullName>
    </alternativeName>
    <alternativeName>
        <fullName evidence="5">Steroid C27-monooxygenase</fullName>
    </alternativeName>
</protein>